<keyword id="KW-1185">Reference proteome</keyword>
<organismHost>
    <name type="scientific">Homo sapiens</name>
    <name type="common">Human</name>
    <dbReference type="NCBI Taxonomy" id="9606"/>
</organismHost>
<feature type="chain" id="PRO_0000099311" description="Protein OPG159">
    <location>
        <begin position="1"/>
        <end position="140"/>
    </location>
</feature>
<protein>
    <recommendedName>
        <fullName>Protein OPG159</fullName>
    </recommendedName>
</protein>
<proteinExistence type="inferred from homology"/>
<organism>
    <name type="scientific">Variola virus (isolate Human/India/Ind3/1967)</name>
    <name type="common">VARV</name>
    <name type="synonym">Smallpox virus</name>
    <dbReference type="NCBI Taxonomy" id="587200"/>
    <lineage>
        <taxon>Viruses</taxon>
        <taxon>Varidnaviria</taxon>
        <taxon>Bamfordvirae</taxon>
        <taxon>Nucleocytoviricota</taxon>
        <taxon>Pokkesviricetes</taxon>
        <taxon>Chitovirales</taxon>
        <taxon>Poxviridae</taxon>
        <taxon>Chordopoxvirinae</taxon>
        <taxon>Orthopoxvirus</taxon>
        <taxon>Variola virus</taxon>
    </lineage>
</organism>
<gene>
    <name type="primary">OPG159</name>
    <name type="ORF">A31R</name>
    <name type="ORF">A34R</name>
</gene>
<sequence length="140" mass="16365">MVSILNTLRFLEKTSFYNCNDSITKEKIKIKHKGMSFVFYKPKHSTVVKYLSGGCIYHDDLVVLGKVTINDLKMMLFYMDLSYHGVTSSGVIYKLGSSIDRLSLNRTIVTKVNNNYNNYNNYNNYYNCYNYDDTFFDDDD</sequence>
<evidence type="ECO:0000305" key="1"/>
<dbReference type="EMBL" id="X69198">
    <property type="protein sequence ID" value="CAA49079.1"/>
    <property type="molecule type" value="Genomic_DNA"/>
</dbReference>
<dbReference type="EMBL" id="X67115">
    <property type="protein sequence ID" value="CAA47505.1"/>
    <property type="molecule type" value="Genomic_DNA"/>
</dbReference>
<dbReference type="PIR" id="H36851">
    <property type="entry name" value="H36851"/>
</dbReference>
<dbReference type="RefSeq" id="NP_042182.1">
    <property type="nucleotide sequence ID" value="NC_001611.1"/>
</dbReference>
<dbReference type="GeneID" id="1486512"/>
<dbReference type="KEGG" id="vg:1486512"/>
<dbReference type="Proteomes" id="UP000002060">
    <property type="component" value="Segment"/>
</dbReference>
<dbReference type="InterPro" id="IPR008786">
    <property type="entry name" value="Poxvirus_A31"/>
</dbReference>
<dbReference type="Pfam" id="PF05771">
    <property type="entry name" value="Pox_A31"/>
    <property type="match status" value="1"/>
</dbReference>
<comment type="similarity">
    <text evidence="1">Belongs to the orthopoxvirus OPG159 protein family.</text>
</comment>
<reference key="1">
    <citation type="journal article" date="1991" name="Dokl. Akad. Nauk SSSR">
        <title>Creation of a clone library of fragments from the natural variola virus and study of the structural and functional organization of viral genes from a circle of hosts.</title>
        <authorList>
            <person name="Shchelkunov S.N."/>
            <person name="Marennikova S.S."/>
            <person name="Totmenin A.V."/>
            <person name="Blinov V.M."/>
            <person name="Chizhikov V.E."/>
            <person name="Gutorov V.V."/>
            <person name="Safronov P.F."/>
            <person name="Pozdnyakov S.G."/>
            <person name="Shelukhina E.M."/>
            <person name="Gashnikov P.V."/>
            <person name="Anjaparidze O.G."/>
            <person name="Sandakhchiev L.S."/>
        </authorList>
    </citation>
    <scope>NUCLEOTIDE SEQUENCE [GENOMIC DNA]</scope>
</reference>
<reference key="2">
    <citation type="journal article" date="1993" name="FEBS Lett.">
        <title>Genes of variola and vaccinia viruses necessary to overcome the host protective mechanisms.</title>
        <authorList>
            <person name="Shchelkunov S.N."/>
            <person name="Blinov V.M."/>
            <person name="Sandakhchiev L.S."/>
        </authorList>
    </citation>
    <scope>NUCLEOTIDE SEQUENCE [GENOMIC DNA]</scope>
</reference>
<accession>P0DOS3</accession>
<accession>P33848</accession>
<name>PG159_VAR67</name>